<dbReference type="EMBL" id="AK027568">
    <property type="protein sequence ID" value="BAB55204.1"/>
    <property type="molecule type" value="mRNA"/>
</dbReference>
<dbReference type="EMBL" id="AK075207">
    <property type="protein sequence ID" value="BAC11472.1"/>
    <property type="molecule type" value="mRNA"/>
</dbReference>
<dbReference type="EMBL" id="AL354855">
    <property type="status" value="NOT_ANNOTATED_CDS"/>
    <property type="molecule type" value="Genomic_DNA"/>
</dbReference>
<dbReference type="EMBL" id="BC006362">
    <property type="protein sequence ID" value="AAH06362.2"/>
    <property type="molecule type" value="mRNA"/>
</dbReference>
<dbReference type="CCDS" id="CCDS6942.1"/>
<dbReference type="RefSeq" id="NP_116117.3">
    <property type="nucleotide sequence ID" value="NM_032728.3"/>
</dbReference>
<dbReference type="SMR" id="Q8NBV4"/>
<dbReference type="BioGRID" id="124274">
    <property type="interactions" value="1"/>
</dbReference>
<dbReference type="FunCoup" id="Q8NBV4">
    <property type="interactions" value="108"/>
</dbReference>
<dbReference type="IntAct" id="Q8NBV4">
    <property type="interactions" value="1"/>
</dbReference>
<dbReference type="MINT" id="Q8NBV4"/>
<dbReference type="STRING" id="9606.ENSP00000361338"/>
<dbReference type="DEPOD" id="PLPP7"/>
<dbReference type="iPTMnet" id="Q8NBV4"/>
<dbReference type="PhosphoSitePlus" id="Q8NBV4"/>
<dbReference type="BioMuta" id="PLPP7"/>
<dbReference type="DMDM" id="74751178"/>
<dbReference type="jPOST" id="Q8NBV4"/>
<dbReference type="MassIVE" id="Q8NBV4"/>
<dbReference type="PaxDb" id="9606-ENSP00000361338"/>
<dbReference type="PeptideAtlas" id="Q8NBV4"/>
<dbReference type="ProteomicsDB" id="72827"/>
<dbReference type="Antibodypedia" id="45196">
    <property type="antibodies" value="105 antibodies from 27 providers"/>
</dbReference>
<dbReference type="DNASU" id="84814"/>
<dbReference type="Ensembl" id="ENST00000372264.4">
    <property type="protein sequence ID" value="ENSP00000361338.3"/>
    <property type="gene ID" value="ENSG00000160539.6"/>
</dbReference>
<dbReference type="GeneID" id="84814"/>
<dbReference type="KEGG" id="hsa:84814"/>
<dbReference type="MANE-Select" id="ENST00000372264.4">
    <property type="protein sequence ID" value="ENSP00000361338.3"/>
    <property type="RefSeq nucleotide sequence ID" value="NM_032728.4"/>
    <property type="RefSeq protein sequence ID" value="NP_116117.3"/>
</dbReference>
<dbReference type="UCSC" id="uc004cal.2">
    <property type="organism name" value="human"/>
</dbReference>
<dbReference type="AGR" id="HGNC:28174"/>
<dbReference type="CTD" id="84814"/>
<dbReference type="DisGeNET" id="84814"/>
<dbReference type="GeneCards" id="PLPP7"/>
<dbReference type="HGNC" id="HGNC:28174">
    <property type="gene designation" value="PLPP7"/>
</dbReference>
<dbReference type="HPA" id="ENSG00000160539">
    <property type="expression patterns" value="Group enriched (heart muscle, skeletal muscle, tongue)"/>
</dbReference>
<dbReference type="MIM" id="618743">
    <property type="type" value="gene"/>
</dbReference>
<dbReference type="neXtProt" id="NX_Q8NBV4"/>
<dbReference type="OpenTargets" id="ENSG00000160539"/>
<dbReference type="PharmGKB" id="PA134931886"/>
<dbReference type="VEuPathDB" id="HostDB:ENSG00000160539"/>
<dbReference type="eggNOG" id="KOG4268">
    <property type="taxonomic scope" value="Eukaryota"/>
</dbReference>
<dbReference type="GeneTree" id="ENSGT00940000157147"/>
<dbReference type="HOGENOM" id="CLU_072573_4_0_1"/>
<dbReference type="InParanoid" id="Q8NBV4"/>
<dbReference type="OMA" id="FVSFMLN"/>
<dbReference type="OrthoDB" id="10266771at2759"/>
<dbReference type="PAN-GO" id="Q8NBV4">
    <property type="GO annotations" value="3 GO annotations based on evolutionary models"/>
</dbReference>
<dbReference type="PhylomeDB" id="Q8NBV4"/>
<dbReference type="TreeFam" id="TF323272"/>
<dbReference type="PathwayCommons" id="Q8NBV4"/>
<dbReference type="SignaLink" id="Q8NBV4"/>
<dbReference type="BioGRID-ORCS" id="84814">
    <property type="hits" value="14 hits in 1154 CRISPR screens"/>
</dbReference>
<dbReference type="GenomeRNAi" id="84814"/>
<dbReference type="Pharos" id="Q8NBV4">
    <property type="development level" value="Tdark"/>
</dbReference>
<dbReference type="PRO" id="PR:Q8NBV4"/>
<dbReference type="Proteomes" id="UP000005640">
    <property type="component" value="Chromosome 9"/>
</dbReference>
<dbReference type="RNAct" id="Q8NBV4">
    <property type="molecule type" value="protein"/>
</dbReference>
<dbReference type="Bgee" id="ENSG00000160539">
    <property type="expression patterns" value="Expressed in apex of heart and 126 other cell types or tissues"/>
</dbReference>
<dbReference type="ExpressionAtlas" id="Q8NBV4">
    <property type="expression patterns" value="baseline and differential"/>
</dbReference>
<dbReference type="GO" id="GO:0005789">
    <property type="term" value="C:endoplasmic reticulum membrane"/>
    <property type="evidence" value="ECO:0007669"/>
    <property type="project" value="UniProtKB-SubCell"/>
</dbReference>
<dbReference type="GO" id="GO:0016020">
    <property type="term" value="C:membrane"/>
    <property type="evidence" value="ECO:0000318"/>
    <property type="project" value="GO_Central"/>
</dbReference>
<dbReference type="GO" id="GO:0005635">
    <property type="term" value="C:nuclear envelope"/>
    <property type="evidence" value="ECO:0000318"/>
    <property type="project" value="GO_Central"/>
</dbReference>
<dbReference type="GO" id="GO:0042392">
    <property type="term" value="F:sphingosine-1-phosphate phosphatase activity"/>
    <property type="evidence" value="ECO:0000318"/>
    <property type="project" value="GO_Central"/>
</dbReference>
<dbReference type="GO" id="GO:0010832">
    <property type="term" value="P:negative regulation of myotube differentiation"/>
    <property type="evidence" value="ECO:0007669"/>
    <property type="project" value="Ensembl"/>
</dbReference>
<dbReference type="CDD" id="cd03391">
    <property type="entry name" value="PAP2_containing_2_like"/>
    <property type="match status" value="1"/>
</dbReference>
<dbReference type="Gene3D" id="1.20.144.10">
    <property type="entry name" value="Phosphatidic acid phosphatase type 2/haloperoxidase"/>
    <property type="match status" value="1"/>
</dbReference>
<dbReference type="InterPro" id="IPR036938">
    <property type="entry name" value="P_Acid_Pase_2/haloperoxi_sf"/>
</dbReference>
<dbReference type="InterPro" id="IPR000326">
    <property type="entry name" value="P_Acid_Pase_2/haloperoxidase"/>
</dbReference>
<dbReference type="PANTHER" id="PTHR14969:SF17">
    <property type="entry name" value="INACTIVE PHOSPHOLIPID PHOSPHATASE 7"/>
    <property type="match status" value="1"/>
</dbReference>
<dbReference type="PANTHER" id="PTHR14969">
    <property type="entry name" value="SPHINGOSINE-1-PHOSPHATE PHOSPHOHYDROLASE"/>
    <property type="match status" value="1"/>
</dbReference>
<dbReference type="Pfam" id="PF01569">
    <property type="entry name" value="PAP2"/>
    <property type="match status" value="1"/>
</dbReference>
<dbReference type="SMART" id="SM00014">
    <property type="entry name" value="acidPPc"/>
    <property type="match status" value="1"/>
</dbReference>
<dbReference type="SUPFAM" id="SSF48317">
    <property type="entry name" value="Acid phosphatase/Vanadium-dependent haloperoxidase"/>
    <property type="match status" value="1"/>
</dbReference>
<accession>Q8NBV4</accession>
<accession>Q5T6P0</accession>
<accession>Q96SS7</accession>
<accession>Q9BRC3</accession>
<organism>
    <name type="scientific">Homo sapiens</name>
    <name type="common">Human</name>
    <dbReference type="NCBI Taxonomy" id="9606"/>
    <lineage>
        <taxon>Eukaryota</taxon>
        <taxon>Metazoa</taxon>
        <taxon>Chordata</taxon>
        <taxon>Craniata</taxon>
        <taxon>Vertebrata</taxon>
        <taxon>Euteleostomi</taxon>
        <taxon>Mammalia</taxon>
        <taxon>Eutheria</taxon>
        <taxon>Euarchontoglires</taxon>
        <taxon>Primates</taxon>
        <taxon>Haplorrhini</taxon>
        <taxon>Catarrhini</taxon>
        <taxon>Hominidae</taxon>
        <taxon>Homo</taxon>
    </lineage>
</organism>
<evidence type="ECO:0000250" key="1"/>
<evidence type="ECO:0000250" key="2">
    <source>
        <dbReference type="UniProtKB" id="Q91WB2"/>
    </source>
</evidence>
<evidence type="ECO:0000255" key="3"/>
<evidence type="ECO:0000256" key="4">
    <source>
        <dbReference type="SAM" id="MobiDB-lite"/>
    </source>
</evidence>
<evidence type="ECO:0000269" key="5">
    <source>
    </source>
</evidence>
<evidence type="ECO:0000305" key="6"/>
<evidence type="ECO:0000312" key="7">
    <source>
        <dbReference type="HGNC" id="HGNC:28174"/>
    </source>
</evidence>
<sequence>MPASQSRARARDRNNVLNRAEFLSLNQPPKGGPEPRSSGRKASGPSAQPPPAGDGARERRQSQQLPEEDCMQLNPSFKGIAFNSLLAIDICMSKRLGVCAGRAASWASARSMVKLIGITGHGIPWIGGTILCLVKSSTLAGQEVLMNLLLALLLDIMTVAGVQKLIKRRGPYETSPSLLDYLTMDIYAFPAGHASRAAMVSKFFLSHLVLAVPLRVLLVLWALCVGLSRVMIGRHHVTDVLSGFVIGYLQFRLVELVWMPSSTCQMLISAW</sequence>
<name>PLPP7_HUMAN</name>
<proteinExistence type="evidence at protein level"/>
<comment type="function">
    <text evidence="1">Plays a role as negative regulator of myoblast differentiation, in part through effects on MTOR signaling. Has no detectable enzymatic activity (By similarity).</text>
</comment>
<comment type="subunit">
    <text evidence="1">Homo and heterooligomer. Interacts with MTOR; controls MTOR-dependent IGF2 expression during myoblast differentiation (By similarity).</text>
</comment>
<comment type="subcellular location">
    <subcellularLocation>
        <location>Nucleus envelope</location>
    </subcellularLocation>
    <subcellularLocation>
        <location>Endoplasmic reticulum membrane</location>
    </subcellularLocation>
    <subcellularLocation>
        <location>Membrane</location>
        <topology>Multi-pass membrane protein</topology>
    </subcellularLocation>
    <text evidence="1">Both the N- and C-terminal are exposed to the cytoplasm/nucleoplasm.</text>
</comment>
<comment type="similarity">
    <text evidence="6">Belongs to the PA-phosphatase related phosphoesterase family.</text>
</comment>
<gene>
    <name evidence="7" type="primary">PLPP7</name>
    <name type="synonym">C9orf67</name>
    <name type="synonym">PPAPDC3</name>
</gene>
<reference key="1">
    <citation type="journal article" date="2004" name="Nat. Genet.">
        <title>Complete sequencing and characterization of 21,243 full-length human cDNAs.</title>
        <authorList>
            <person name="Ota T."/>
            <person name="Suzuki Y."/>
            <person name="Nishikawa T."/>
            <person name="Otsuki T."/>
            <person name="Sugiyama T."/>
            <person name="Irie R."/>
            <person name="Wakamatsu A."/>
            <person name="Hayashi K."/>
            <person name="Sato H."/>
            <person name="Nagai K."/>
            <person name="Kimura K."/>
            <person name="Makita H."/>
            <person name="Sekine M."/>
            <person name="Obayashi M."/>
            <person name="Nishi T."/>
            <person name="Shibahara T."/>
            <person name="Tanaka T."/>
            <person name="Ishii S."/>
            <person name="Yamamoto J."/>
            <person name="Saito K."/>
            <person name="Kawai Y."/>
            <person name="Isono Y."/>
            <person name="Nakamura Y."/>
            <person name="Nagahari K."/>
            <person name="Murakami K."/>
            <person name="Yasuda T."/>
            <person name="Iwayanagi T."/>
            <person name="Wagatsuma M."/>
            <person name="Shiratori A."/>
            <person name="Sudo H."/>
            <person name="Hosoiri T."/>
            <person name="Kaku Y."/>
            <person name="Kodaira H."/>
            <person name="Kondo H."/>
            <person name="Sugawara M."/>
            <person name="Takahashi M."/>
            <person name="Kanda K."/>
            <person name="Yokoi T."/>
            <person name="Furuya T."/>
            <person name="Kikkawa E."/>
            <person name="Omura Y."/>
            <person name="Abe K."/>
            <person name="Kamihara K."/>
            <person name="Katsuta N."/>
            <person name="Sato K."/>
            <person name="Tanikawa M."/>
            <person name="Yamazaki M."/>
            <person name="Ninomiya K."/>
            <person name="Ishibashi T."/>
            <person name="Yamashita H."/>
            <person name="Murakawa K."/>
            <person name="Fujimori K."/>
            <person name="Tanai H."/>
            <person name="Kimata M."/>
            <person name="Watanabe M."/>
            <person name="Hiraoka S."/>
            <person name="Chiba Y."/>
            <person name="Ishida S."/>
            <person name="Ono Y."/>
            <person name="Takiguchi S."/>
            <person name="Watanabe S."/>
            <person name="Yosida M."/>
            <person name="Hotuta T."/>
            <person name="Kusano J."/>
            <person name="Kanehori K."/>
            <person name="Takahashi-Fujii A."/>
            <person name="Hara H."/>
            <person name="Tanase T.-O."/>
            <person name="Nomura Y."/>
            <person name="Togiya S."/>
            <person name="Komai F."/>
            <person name="Hara R."/>
            <person name="Takeuchi K."/>
            <person name="Arita M."/>
            <person name="Imose N."/>
            <person name="Musashino K."/>
            <person name="Yuuki H."/>
            <person name="Oshima A."/>
            <person name="Sasaki N."/>
            <person name="Aotsuka S."/>
            <person name="Yoshikawa Y."/>
            <person name="Matsunawa H."/>
            <person name="Ichihara T."/>
            <person name="Shiohata N."/>
            <person name="Sano S."/>
            <person name="Moriya S."/>
            <person name="Momiyama H."/>
            <person name="Satoh N."/>
            <person name="Takami S."/>
            <person name="Terashima Y."/>
            <person name="Suzuki O."/>
            <person name="Nakagawa S."/>
            <person name="Senoh A."/>
            <person name="Mizoguchi H."/>
            <person name="Goto Y."/>
            <person name="Shimizu F."/>
            <person name="Wakebe H."/>
            <person name="Hishigaki H."/>
            <person name="Watanabe T."/>
            <person name="Sugiyama A."/>
            <person name="Takemoto M."/>
            <person name="Kawakami B."/>
            <person name="Yamazaki M."/>
            <person name="Watanabe K."/>
            <person name="Kumagai A."/>
            <person name="Itakura S."/>
            <person name="Fukuzumi Y."/>
            <person name="Fujimori Y."/>
            <person name="Komiyama M."/>
            <person name="Tashiro H."/>
            <person name="Tanigami A."/>
            <person name="Fujiwara T."/>
            <person name="Ono T."/>
            <person name="Yamada K."/>
            <person name="Fujii Y."/>
            <person name="Ozaki K."/>
            <person name="Hirao M."/>
            <person name="Ohmori Y."/>
            <person name="Kawabata A."/>
            <person name="Hikiji T."/>
            <person name="Kobatake N."/>
            <person name="Inagaki H."/>
            <person name="Ikema Y."/>
            <person name="Okamoto S."/>
            <person name="Okitani R."/>
            <person name="Kawakami T."/>
            <person name="Noguchi S."/>
            <person name="Itoh T."/>
            <person name="Shigeta K."/>
            <person name="Senba T."/>
            <person name="Matsumura K."/>
            <person name="Nakajima Y."/>
            <person name="Mizuno T."/>
            <person name="Morinaga M."/>
            <person name="Sasaki M."/>
            <person name="Togashi T."/>
            <person name="Oyama M."/>
            <person name="Hata H."/>
            <person name="Watanabe M."/>
            <person name="Komatsu T."/>
            <person name="Mizushima-Sugano J."/>
            <person name="Satoh T."/>
            <person name="Shirai Y."/>
            <person name="Takahashi Y."/>
            <person name="Nakagawa K."/>
            <person name="Okumura K."/>
            <person name="Nagase T."/>
            <person name="Nomura N."/>
            <person name="Kikuchi H."/>
            <person name="Masuho Y."/>
            <person name="Yamashita R."/>
            <person name="Nakai K."/>
            <person name="Yada T."/>
            <person name="Nakamura Y."/>
            <person name="Ohara O."/>
            <person name="Isogai T."/>
            <person name="Sugano S."/>
        </authorList>
    </citation>
    <scope>NUCLEOTIDE SEQUENCE [LARGE SCALE MRNA]</scope>
    <source>
        <tissue>Teratocarcinoma</tissue>
    </source>
</reference>
<reference key="2">
    <citation type="journal article" date="2005" name="DNA Res.">
        <title>Signal sequence and keyword trap in silico for selection of full-length human cDNAs encoding secretion or membrane proteins from oligo-capped cDNA libraries.</title>
        <authorList>
            <person name="Otsuki T."/>
            <person name="Ota T."/>
            <person name="Nishikawa T."/>
            <person name="Hayashi K."/>
            <person name="Suzuki Y."/>
            <person name="Yamamoto J."/>
            <person name="Wakamatsu A."/>
            <person name="Kimura K."/>
            <person name="Sakamoto K."/>
            <person name="Hatano N."/>
            <person name="Kawai Y."/>
            <person name="Ishii S."/>
            <person name="Saito K."/>
            <person name="Kojima S."/>
            <person name="Sugiyama T."/>
            <person name="Ono T."/>
            <person name="Okano K."/>
            <person name="Yoshikawa Y."/>
            <person name="Aotsuka S."/>
            <person name="Sasaki N."/>
            <person name="Hattori A."/>
            <person name="Okumura K."/>
            <person name="Nagai K."/>
            <person name="Sugano S."/>
            <person name="Isogai T."/>
        </authorList>
    </citation>
    <scope>NUCLEOTIDE SEQUENCE [LARGE SCALE MRNA]</scope>
    <source>
        <tissue>Placenta</tissue>
    </source>
</reference>
<reference key="3">
    <citation type="journal article" date="2004" name="Nature">
        <title>DNA sequence and analysis of human chromosome 9.</title>
        <authorList>
            <person name="Humphray S.J."/>
            <person name="Oliver K."/>
            <person name="Hunt A.R."/>
            <person name="Plumb R.W."/>
            <person name="Loveland J.E."/>
            <person name="Howe K.L."/>
            <person name="Andrews T.D."/>
            <person name="Searle S."/>
            <person name="Hunt S.E."/>
            <person name="Scott C.E."/>
            <person name="Jones M.C."/>
            <person name="Ainscough R."/>
            <person name="Almeida J.P."/>
            <person name="Ambrose K.D."/>
            <person name="Ashwell R.I.S."/>
            <person name="Babbage A.K."/>
            <person name="Babbage S."/>
            <person name="Bagguley C.L."/>
            <person name="Bailey J."/>
            <person name="Banerjee R."/>
            <person name="Barker D.J."/>
            <person name="Barlow K.F."/>
            <person name="Bates K."/>
            <person name="Beasley H."/>
            <person name="Beasley O."/>
            <person name="Bird C.P."/>
            <person name="Bray-Allen S."/>
            <person name="Brown A.J."/>
            <person name="Brown J.Y."/>
            <person name="Burford D."/>
            <person name="Burrill W."/>
            <person name="Burton J."/>
            <person name="Carder C."/>
            <person name="Carter N.P."/>
            <person name="Chapman J.C."/>
            <person name="Chen Y."/>
            <person name="Clarke G."/>
            <person name="Clark S.Y."/>
            <person name="Clee C.M."/>
            <person name="Clegg S."/>
            <person name="Collier R.E."/>
            <person name="Corby N."/>
            <person name="Crosier M."/>
            <person name="Cummings A.T."/>
            <person name="Davies J."/>
            <person name="Dhami P."/>
            <person name="Dunn M."/>
            <person name="Dutta I."/>
            <person name="Dyer L.W."/>
            <person name="Earthrowl M.E."/>
            <person name="Faulkner L."/>
            <person name="Fleming C.J."/>
            <person name="Frankish A."/>
            <person name="Frankland J.A."/>
            <person name="French L."/>
            <person name="Fricker D.G."/>
            <person name="Garner P."/>
            <person name="Garnett J."/>
            <person name="Ghori J."/>
            <person name="Gilbert J.G.R."/>
            <person name="Glison C."/>
            <person name="Grafham D.V."/>
            <person name="Gribble S."/>
            <person name="Griffiths C."/>
            <person name="Griffiths-Jones S."/>
            <person name="Grocock R."/>
            <person name="Guy J."/>
            <person name="Hall R.E."/>
            <person name="Hammond S."/>
            <person name="Harley J.L."/>
            <person name="Harrison E.S.I."/>
            <person name="Hart E.A."/>
            <person name="Heath P.D."/>
            <person name="Henderson C.D."/>
            <person name="Hopkins B.L."/>
            <person name="Howard P.J."/>
            <person name="Howden P.J."/>
            <person name="Huckle E."/>
            <person name="Johnson C."/>
            <person name="Johnson D."/>
            <person name="Joy A.A."/>
            <person name="Kay M."/>
            <person name="Keenan S."/>
            <person name="Kershaw J.K."/>
            <person name="Kimberley A.M."/>
            <person name="King A."/>
            <person name="Knights A."/>
            <person name="Laird G.K."/>
            <person name="Langford C."/>
            <person name="Lawlor S."/>
            <person name="Leongamornlert D.A."/>
            <person name="Leversha M."/>
            <person name="Lloyd C."/>
            <person name="Lloyd D.M."/>
            <person name="Lovell J."/>
            <person name="Martin S."/>
            <person name="Mashreghi-Mohammadi M."/>
            <person name="Matthews L."/>
            <person name="McLaren S."/>
            <person name="McLay K.E."/>
            <person name="McMurray A."/>
            <person name="Milne S."/>
            <person name="Nickerson T."/>
            <person name="Nisbett J."/>
            <person name="Nordsiek G."/>
            <person name="Pearce A.V."/>
            <person name="Peck A.I."/>
            <person name="Porter K.M."/>
            <person name="Pandian R."/>
            <person name="Pelan S."/>
            <person name="Phillimore B."/>
            <person name="Povey S."/>
            <person name="Ramsey Y."/>
            <person name="Rand V."/>
            <person name="Scharfe M."/>
            <person name="Sehra H.K."/>
            <person name="Shownkeen R."/>
            <person name="Sims S.K."/>
            <person name="Skuce C.D."/>
            <person name="Smith M."/>
            <person name="Steward C.A."/>
            <person name="Swarbreck D."/>
            <person name="Sycamore N."/>
            <person name="Tester J."/>
            <person name="Thorpe A."/>
            <person name="Tracey A."/>
            <person name="Tromans A."/>
            <person name="Thomas D.W."/>
            <person name="Wall M."/>
            <person name="Wallis J.M."/>
            <person name="West A.P."/>
            <person name="Whitehead S.L."/>
            <person name="Willey D.L."/>
            <person name="Williams S.A."/>
            <person name="Wilming L."/>
            <person name="Wray P.W."/>
            <person name="Young L."/>
            <person name="Ashurst J.L."/>
            <person name="Coulson A."/>
            <person name="Blocker H."/>
            <person name="Durbin R.M."/>
            <person name="Sulston J.E."/>
            <person name="Hubbard T."/>
            <person name="Jackson M.J."/>
            <person name="Bentley D.R."/>
            <person name="Beck S."/>
            <person name="Rogers J."/>
            <person name="Dunham I."/>
        </authorList>
    </citation>
    <scope>NUCLEOTIDE SEQUENCE [LARGE SCALE GENOMIC DNA]</scope>
</reference>
<reference key="4">
    <citation type="journal article" date="2004" name="Genome Res.">
        <title>The status, quality, and expansion of the NIH full-length cDNA project: the Mammalian Gene Collection (MGC).</title>
        <authorList>
            <consortium name="The MGC Project Team"/>
        </authorList>
    </citation>
    <scope>NUCLEOTIDE SEQUENCE [LARGE SCALE MRNA]</scope>
    <scope>VARIANT MET-174</scope>
    <source>
        <tissue>Brain</tissue>
    </source>
</reference>
<feature type="chain" id="PRO_0000239401" description="Inactive phospholipid phosphatase 7">
    <location>
        <begin position="1"/>
        <end position="271"/>
    </location>
</feature>
<feature type="topological domain" description="Cytoplasmic" evidence="3">
    <location>
        <begin position="1"/>
        <end position="112"/>
    </location>
</feature>
<feature type="transmembrane region" description="Helical" evidence="3">
    <location>
        <begin position="113"/>
        <end position="133"/>
    </location>
</feature>
<feature type="topological domain" description="Extracellular" evidence="3">
    <location>
        <begin position="134"/>
        <end position="141"/>
    </location>
</feature>
<feature type="transmembrane region" description="Helical" evidence="3">
    <location>
        <begin position="142"/>
        <end position="162"/>
    </location>
</feature>
<feature type="topological domain" description="Cytoplasmic" evidence="3">
    <location>
        <begin position="163"/>
        <end position="202"/>
    </location>
</feature>
<feature type="transmembrane region" description="Helical" evidence="3">
    <location>
        <begin position="203"/>
        <end position="223"/>
    </location>
</feature>
<feature type="topological domain" description="Extracellular" evidence="3">
    <location>
        <begin position="224"/>
        <end position="239"/>
    </location>
</feature>
<feature type="transmembrane region" description="Helical" evidence="3">
    <location>
        <begin position="240"/>
        <end position="260"/>
    </location>
</feature>
<feature type="topological domain" description="Cytoplasmic" evidence="3">
    <location>
        <begin position="261"/>
        <end position="271"/>
    </location>
</feature>
<feature type="region of interest" description="Disordered" evidence="4">
    <location>
        <begin position="1"/>
        <end position="66"/>
    </location>
</feature>
<feature type="region of interest" description="Interaction with MTOR" evidence="1">
    <location>
        <begin position="70"/>
        <end position="91"/>
    </location>
</feature>
<feature type="modified residue" description="Phosphoserine" evidence="2">
    <location>
        <position position="43"/>
    </location>
</feature>
<feature type="modified residue" description="Phosphoserine" evidence="2">
    <location>
        <position position="62"/>
    </location>
</feature>
<feature type="sequence variant" id="VAR_026646" description="In dbSNP:rs2966332." evidence="5">
    <original>T</original>
    <variation>M</variation>
    <location>
        <position position="174"/>
    </location>
</feature>
<feature type="sequence variant" id="VAR_026647" description="In dbSNP:rs11244366.">
    <original>L</original>
    <variation>V</variation>
    <location>
        <position position="267"/>
    </location>
</feature>
<feature type="sequence conflict" description="In Ref. 1; BAB55204." evidence="6" ref="1">
    <original>F</original>
    <variation>Y</variation>
    <location>
        <position position="203"/>
    </location>
</feature>
<protein>
    <recommendedName>
        <fullName evidence="7">Inactive phospholipid phosphatase 7</fullName>
    </recommendedName>
    <alternativeName>
        <fullName>Phosphatidic acid phosphatase type 2 domain-containing protein 3</fullName>
    </alternativeName>
</protein>
<keyword id="KW-0256">Endoplasmic reticulum</keyword>
<keyword id="KW-0472">Membrane</keyword>
<keyword id="KW-0539">Nucleus</keyword>
<keyword id="KW-0597">Phosphoprotein</keyword>
<keyword id="KW-1267">Proteomics identification</keyword>
<keyword id="KW-1185">Reference proteome</keyword>
<keyword id="KW-0812">Transmembrane</keyword>
<keyword id="KW-1133">Transmembrane helix</keyword>